<name>BRAC_ANNTR</name>
<gene>
    <name evidence="4" type="primary">braC</name>
</gene>
<reference key="1">
    <citation type="journal article" date="2020" name="Chem. Commun. (Camb.)">
        <title>Biosynthesis of oxygenated brasilane terpene glycosides involves a promiscuous N-acetylglucosamine transferase.</title>
        <authorList>
            <person name="Feng J."/>
            <person name="Surup F."/>
            <person name="Hauser M."/>
            <person name="Miller A."/>
            <person name="Wennrich J.P."/>
            <person name="Stadler M."/>
            <person name="Cox R.J."/>
            <person name="Kuhnert E."/>
        </authorList>
    </citation>
    <scope>NUCLEOTIDE SEQUENCE [GENOMIC DNA]</scope>
    <scope>FUNCTION</scope>
    <scope>CATALYTIC ACTIVITY</scope>
    <scope>PATHWAY</scope>
    <source>
        <strain>DSM 103480 / CBS 140778</strain>
    </source>
</reference>
<protein>
    <recommendedName>
        <fullName evidence="4">Cytochrome P450 monooxygenase braC</fullName>
        <ecNumber evidence="3">1.-.-.-</ecNumber>
    </recommendedName>
    <alternativeName>
        <fullName evidence="4">Brasilane terpene glycosides biosynthesis cluster protein C</fullName>
    </alternativeName>
</protein>
<accession>P9WER2</accession>
<accession>A0A866WL53</accession>
<keyword id="KW-0349">Heme</keyword>
<keyword id="KW-0408">Iron</keyword>
<keyword id="KW-0472">Membrane</keyword>
<keyword id="KW-0479">Metal-binding</keyword>
<keyword id="KW-0503">Monooxygenase</keyword>
<keyword id="KW-0560">Oxidoreductase</keyword>
<keyword id="KW-0812">Transmembrane</keyword>
<keyword id="KW-1133">Transmembrane helix</keyword>
<evidence type="ECO:0000250" key="1">
    <source>
        <dbReference type="UniProtKB" id="P04798"/>
    </source>
</evidence>
<evidence type="ECO:0000255" key="2"/>
<evidence type="ECO:0000269" key="3">
    <source>
    </source>
</evidence>
<evidence type="ECO:0000303" key="4">
    <source>
    </source>
</evidence>
<evidence type="ECO:0000305" key="5"/>
<dbReference type="EC" id="1.-.-.-" evidence="3"/>
<dbReference type="EMBL" id="MT383109">
    <property type="protein sequence ID" value="QOE88885.1"/>
    <property type="molecule type" value="Genomic_DNA"/>
</dbReference>
<dbReference type="SMR" id="P9WER2"/>
<dbReference type="GO" id="GO:0016020">
    <property type="term" value="C:membrane"/>
    <property type="evidence" value="ECO:0007669"/>
    <property type="project" value="UniProtKB-SubCell"/>
</dbReference>
<dbReference type="GO" id="GO:0020037">
    <property type="term" value="F:heme binding"/>
    <property type="evidence" value="ECO:0007669"/>
    <property type="project" value="InterPro"/>
</dbReference>
<dbReference type="GO" id="GO:0005506">
    <property type="term" value="F:iron ion binding"/>
    <property type="evidence" value="ECO:0007669"/>
    <property type="project" value="InterPro"/>
</dbReference>
<dbReference type="GO" id="GO:0004497">
    <property type="term" value="F:monooxygenase activity"/>
    <property type="evidence" value="ECO:0007669"/>
    <property type="project" value="UniProtKB-KW"/>
</dbReference>
<dbReference type="GO" id="GO:0016705">
    <property type="term" value="F:oxidoreductase activity, acting on paired donors, with incorporation or reduction of molecular oxygen"/>
    <property type="evidence" value="ECO:0007669"/>
    <property type="project" value="InterPro"/>
</dbReference>
<dbReference type="GO" id="GO:0019748">
    <property type="term" value="P:secondary metabolic process"/>
    <property type="evidence" value="ECO:0007669"/>
    <property type="project" value="UniProtKB-ARBA"/>
</dbReference>
<dbReference type="CDD" id="cd11041">
    <property type="entry name" value="CYP503A1-like"/>
    <property type="match status" value="1"/>
</dbReference>
<dbReference type="Gene3D" id="1.10.630.10">
    <property type="entry name" value="Cytochrome P450"/>
    <property type="match status" value="1"/>
</dbReference>
<dbReference type="InterPro" id="IPR001128">
    <property type="entry name" value="Cyt_P450"/>
</dbReference>
<dbReference type="InterPro" id="IPR002403">
    <property type="entry name" value="Cyt_P450_E_grp-IV"/>
</dbReference>
<dbReference type="InterPro" id="IPR036396">
    <property type="entry name" value="Cyt_P450_sf"/>
</dbReference>
<dbReference type="PANTHER" id="PTHR46206">
    <property type="entry name" value="CYTOCHROME P450"/>
    <property type="match status" value="1"/>
</dbReference>
<dbReference type="PANTHER" id="PTHR46206:SF6">
    <property type="entry name" value="CYTOCHROME P450 MONOOXYGENASE AN1598-RELATED"/>
    <property type="match status" value="1"/>
</dbReference>
<dbReference type="Pfam" id="PF00067">
    <property type="entry name" value="p450"/>
    <property type="match status" value="1"/>
</dbReference>
<dbReference type="PRINTS" id="PR00465">
    <property type="entry name" value="EP450IV"/>
</dbReference>
<dbReference type="SUPFAM" id="SSF48264">
    <property type="entry name" value="Cytochrome P450"/>
    <property type="match status" value="1"/>
</dbReference>
<feature type="chain" id="PRO_0000453906" description="Cytochrome P450 monooxygenase braC">
    <location>
        <begin position="1"/>
        <end position="504"/>
    </location>
</feature>
<feature type="transmembrane region" description="Helical" evidence="2">
    <location>
        <begin position="4"/>
        <end position="24"/>
    </location>
</feature>
<feature type="binding site" description="axial binding residue" evidence="1">
    <location>
        <position position="448"/>
    </location>
    <ligand>
        <name>heme</name>
        <dbReference type="ChEBI" id="CHEBI:30413"/>
    </ligand>
    <ligandPart>
        <name>Fe</name>
        <dbReference type="ChEBI" id="CHEBI:18248"/>
    </ligandPart>
</feature>
<organism>
    <name type="scientific">Annulohypoxylon truncatum</name>
    <name type="common">Hypoxylon truncatum</name>
    <dbReference type="NCBI Taxonomy" id="327061"/>
    <lineage>
        <taxon>Eukaryota</taxon>
        <taxon>Fungi</taxon>
        <taxon>Dikarya</taxon>
        <taxon>Ascomycota</taxon>
        <taxon>Pezizomycotina</taxon>
        <taxon>Sordariomycetes</taxon>
        <taxon>Xylariomycetidae</taxon>
        <taxon>Xylariales</taxon>
        <taxon>Hypoxylaceae</taxon>
        <taxon>Annulohypoxylon</taxon>
    </lineage>
</organism>
<proteinExistence type="evidence at protein level"/>
<sequence length="504" mass="57587">MASLYLPTIWASTLTAATIFIVAVLSKWLRKPRSFDVPIVGAESGDLNVLKARYVQEADALLREGYEKFKDAIFQVITPDGPRVFLPRKYAHDLKDYSRHEASGMKALADRHIGHYTTIDHESDIMLGAIKIDLNRNLGTFVGDVEHEVAFCFETQFPACDDWTPIDLHDKLLRVVAQASARIFVGYPMCRNEEWLECSTKFALDVMTGGEKLKQWHPYLRPIAQYFVPEMTRIRGDHQRALELLLPELNRRLAEPADPDSSPHNDMIQWMQDRARKTGDNSFDNKELANLQMLTATAAIHTTRLAIIHALYDLAARPEYVEPLRKEILEATKDSNGVLQKQHLTQMKMLDSFMKESQRHSPPSVATYQRKAMIPITLSNGFHIPAGTIVQCNTNILDETPPDWGDPHAFDGFRFYKLRNRTPDDINKFQFASPTYDSMQFGFGKDACPGRFFASNQIKIILAYILSHYDIKFEDSVVGRPKNFMFEVNVLADPTKMVLFKKIR</sequence>
<comment type="function">
    <text evidence="3">Cytochrome P450 monooxygenase; part of the gene cluster that mediates the biosynthesis of the brasilane terpene glycosides brasilane D and E (PubMed:32936132). The biosynthesis starts with the activity of the terpene cyclase braA that converts farnesyl pyrophosphate into the sesquiterpene alcohol trichobrasilenol (PubMed:32936132). Subsequently, trichobrasilenol is glycosylated by the O-glycosyltransferase braB putatively using UDP-GlcNAc as sugar donor to yield brasilane A (PubMed:32936132). The latter then undergoes two rounds of oxidation performed by the cytochrome P450 monooxygenase braC (PubMed:32936132). In the first round braC hydroxylates C-12 forming brasilane D, which serves as substrate in the second round to establish the epoxide at the bond between C-5 and C-10 and oxidize the alcohol at C-12 to an aldehyde leading to the final product brasilane E (PubMed:32936132).</text>
</comment>
<comment type="cofactor">
    <cofactor evidence="1">
        <name>heme</name>
        <dbReference type="ChEBI" id="CHEBI:30413"/>
    </cofactor>
</comment>
<comment type="pathway">
    <text evidence="3">Secondary metabolite biosynthesis.</text>
</comment>
<comment type="subcellular location">
    <subcellularLocation>
        <location evidence="2">Membrane</location>
        <topology evidence="2">Single-pass membrane protein</topology>
    </subcellularLocation>
</comment>
<comment type="similarity">
    <text evidence="5">Belongs to the cytochrome P450 family.</text>
</comment>